<reference key="1">
    <citation type="journal article" date="2015" name="Mol. Plant Microbe Interact.">
        <title>Genome, transcriptome, and functional analyses of Penicillium expansum provide new insights into secondary metabolism and pathogenicity.</title>
        <authorList>
            <person name="Ballester A.R."/>
            <person name="Marcet-Houben M."/>
            <person name="Levin E."/>
            <person name="Sela N."/>
            <person name="Selma-Lazaro C."/>
            <person name="Carmona L."/>
            <person name="Wisniewski M."/>
            <person name="Droby S."/>
            <person name="Gonzalez-Candelas L."/>
            <person name="Gabaldon T."/>
        </authorList>
    </citation>
    <scope>NUCLEOTIDE SEQUENCE [LARGE SCALE GENOMIC DNA]</scope>
    <source>
        <strain>MD-8</strain>
    </source>
</reference>
<reference key="2">
    <citation type="journal article" date="2023" name="Appl. Microbiol. Biotechnol.">
        <title>Delineation of the CYP505E subfamily of fungal self-sufficient in-chain hydroxylating cytochrome P450 monooxygenases.</title>
        <authorList>
            <person name="Smit M.S."/>
            <person name="Maseme M.J."/>
            <person name="van Marwijk J."/>
            <person name="Aschenbrenner J.C."/>
            <person name="Opperman D.J."/>
        </authorList>
    </citation>
    <scope>FUNCTION</scope>
    <scope>CATALYTIC ACTIVITY</scope>
</reference>
<gene>
    <name evidence="6" type="primary">CYP505E4</name>
    <name type="ORF">PEX2_031250</name>
</gene>
<organism>
    <name type="scientific">Penicillium expansum</name>
    <name type="common">Blue mold rot fungus</name>
    <dbReference type="NCBI Taxonomy" id="27334"/>
    <lineage>
        <taxon>Eukaryota</taxon>
        <taxon>Fungi</taxon>
        <taxon>Dikarya</taxon>
        <taxon>Ascomycota</taxon>
        <taxon>Pezizomycotina</taxon>
        <taxon>Eurotiomycetes</taxon>
        <taxon>Eurotiomycetidae</taxon>
        <taxon>Eurotiales</taxon>
        <taxon>Aspergillaceae</taxon>
        <taxon>Penicillium</taxon>
    </lineage>
</organism>
<name>CYPE4_PENEN</name>
<protein>
    <recommendedName>
        <fullName evidence="6">Self-sufficient cytochrome P450 monooxygenase CYP505E4</fullName>
    </recommendedName>
    <alternativeName>
        <fullName evidence="6">Bifunctional cytochrome P450/NADPH--P450 reductase CYP505E4</fullName>
    </alternativeName>
    <domain>
        <recommendedName>
            <fullName evidence="6">Cytochrome P450 monooxygenase</fullName>
            <ecNumber evidence="5">1.14.14.1</ecNumber>
        </recommendedName>
    </domain>
    <domain>
        <recommendedName>
            <fullName evidence="6">NADPH--cytochrome P450 reductase</fullName>
            <ecNumber evidence="5">1.6.2.4</ecNumber>
        </recommendedName>
    </domain>
</protein>
<sequence>MKDMESIPGPKPLPVVGNLFDIDLENGLQSIIKMAHEFGPLFQITINGQKQIFATSQALVDELCDETRFHKAVMGGIQKLRMLAKDGLFTAYHGERGWGIAHRILMPAFGPLRIRDMFEDMSDVAQQLCFKWARQGSSTSINICDDFTRLTLDTIALCTMGFRLNSYYNSNALHPFIESMLYVLKEAELQSTLPGVANCMRVKAQRRMSKHIDAMRSMARNLIEERRAKPEPVDDLLNTLLNGRDPITGEGMSDDLIISNIITFLIAGHETTSGLLSFTFYYLLQNQDVLERARNEVDEVTGVGPITVQHLAKLPYIDAIMKESLRLMPTAPAFTVTPQKPEVLGGKWMINTGDSVNLLLPVCLRDETVFGPDAGEFRPNRMLEENFSKLPPNSWKPFGNGERGCIGRAFAWQEAQLVVALVLRTFDLAAEDPYYKLRIKETLTIKPDGFRIRATLRHGKSATALSQHNISVGAAASPASSTYLAGNENGRDAAGGQPVSFFYGSNSGTCKALTHRLASTMMTRGFTDQNIAPLDSAVDNLPRDQPTIIITTTYDGQPTDDAKKFVAWLESGNSPSLQGVSYAVFGCGHQDWTKTFYRIPILIDNLMYKAGATRLATRGAANAAISDLFSDLEVWEETNLLPGLRESFYPPNNSNFVPLEPHQLQISINKPTRVGMHRDLIEAKVTAIRTLTSPGAPEKRHLEFCIPGETTLRPGDHLNILPVNPPSTVSRALARFNLAPDHSITFESSNALDLPQATPVSAAELFSSYLELSQPATRNNLKELASTTPSDGEKQELLHLYDSYDSLIRAKRASVLDLLEQFTSVTLPITTFISMLPALRVRTYSLSMAPSFKPLHYSLTFSVINEPAWNGNGRYLGVASNYLASLNLGSILYISPRPAKDAFHLPTDQSSKPIIMICAGSGLAPFRSFIQDRMLWQQQDKTLAKALLFFGCRSPQLDDLYHDELSQFEAAGVVEVRRAYSKVPNHYLAKGCRYVQHRLLTETETIQDMWAQDAIIYVCGSGNLAKGVKAVLESMLGTLYERYITEIF</sequence>
<proteinExistence type="evidence at protein level"/>
<dbReference type="EC" id="1.14.14.1" evidence="5"/>
<dbReference type="EC" id="1.6.2.4" evidence="5"/>
<dbReference type="EMBL" id="JQFZ01000381">
    <property type="protein sequence ID" value="KGO49354.1"/>
    <property type="molecule type" value="Genomic_DNA"/>
</dbReference>
<dbReference type="RefSeq" id="XP_016592781.1">
    <property type="nucleotide sequence ID" value="XM_016740400.1"/>
</dbReference>
<dbReference type="SMR" id="A0A0A2J1Z6"/>
<dbReference type="STRING" id="27334.A0A0A2J1Z6"/>
<dbReference type="GeneID" id="27675819"/>
<dbReference type="VEuPathDB" id="FungiDB:PEXP_042100"/>
<dbReference type="HOGENOM" id="CLU_001570_7_0_1"/>
<dbReference type="Proteomes" id="UP000030143">
    <property type="component" value="Unassembled WGS sequence"/>
</dbReference>
<dbReference type="GO" id="GO:0005829">
    <property type="term" value="C:cytosol"/>
    <property type="evidence" value="ECO:0007669"/>
    <property type="project" value="TreeGrafter"/>
</dbReference>
<dbReference type="GO" id="GO:0070330">
    <property type="term" value="F:aromatase activity"/>
    <property type="evidence" value="ECO:0007669"/>
    <property type="project" value="InterPro"/>
</dbReference>
<dbReference type="GO" id="GO:0050660">
    <property type="term" value="F:flavin adenine dinucleotide binding"/>
    <property type="evidence" value="ECO:0007669"/>
    <property type="project" value="TreeGrafter"/>
</dbReference>
<dbReference type="GO" id="GO:0010181">
    <property type="term" value="F:FMN binding"/>
    <property type="evidence" value="ECO:0007669"/>
    <property type="project" value="InterPro"/>
</dbReference>
<dbReference type="GO" id="GO:0020037">
    <property type="term" value="F:heme binding"/>
    <property type="evidence" value="ECO:0007669"/>
    <property type="project" value="InterPro"/>
</dbReference>
<dbReference type="GO" id="GO:0005506">
    <property type="term" value="F:iron ion binding"/>
    <property type="evidence" value="ECO:0007669"/>
    <property type="project" value="InterPro"/>
</dbReference>
<dbReference type="GO" id="GO:0003958">
    <property type="term" value="F:NADPH-hemoprotein reductase activity"/>
    <property type="evidence" value="ECO:0007669"/>
    <property type="project" value="UniProtKB-EC"/>
</dbReference>
<dbReference type="GO" id="GO:0043386">
    <property type="term" value="P:mycotoxin biosynthetic process"/>
    <property type="evidence" value="ECO:0007669"/>
    <property type="project" value="UniProtKB-ARBA"/>
</dbReference>
<dbReference type="CDD" id="cd06206">
    <property type="entry name" value="bifunctional_CYPOR"/>
    <property type="match status" value="1"/>
</dbReference>
<dbReference type="CDD" id="cd11068">
    <property type="entry name" value="CYP120A1"/>
    <property type="match status" value="1"/>
</dbReference>
<dbReference type="FunFam" id="1.10.630.10:FF:000040">
    <property type="entry name" value="Bifunctional cytochrome P450/NADPH--P450 reductase"/>
    <property type="match status" value="1"/>
</dbReference>
<dbReference type="Gene3D" id="3.40.50.360">
    <property type="match status" value="1"/>
</dbReference>
<dbReference type="Gene3D" id="1.10.630.10">
    <property type="entry name" value="Cytochrome P450"/>
    <property type="match status" value="1"/>
</dbReference>
<dbReference type="Gene3D" id="1.20.990.10">
    <property type="entry name" value="NADPH-cytochrome p450 Reductase, Chain A, domain 3"/>
    <property type="match status" value="1"/>
</dbReference>
<dbReference type="Gene3D" id="3.40.50.80">
    <property type="entry name" value="Nucleotide-binding domain of ferredoxin-NADP reductase (FNR) module"/>
    <property type="match status" value="1"/>
</dbReference>
<dbReference type="Gene3D" id="2.40.30.10">
    <property type="entry name" value="Translation factors"/>
    <property type="match status" value="1"/>
</dbReference>
<dbReference type="InterPro" id="IPR023206">
    <property type="entry name" value="Bifunctional_P450_P450_red"/>
</dbReference>
<dbReference type="InterPro" id="IPR003097">
    <property type="entry name" value="CysJ-like_FAD-binding"/>
</dbReference>
<dbReference type="InterPro" id="IPR001128">
    <property type="entry name" value="Cyt_P450"/>
</dbReference>
<dbReference type="InterPro" id="IPR017972">
    <property type="entry name" value="Cyt_P450_CS"/>
</dbReference>
<dbReference type="InterPro" id="IPR036396">
    <property type="entry name" value="Cyt_P450_sf"/>
</dbReference>
<dbReference type="InterPro" id="IPR017927">
    <property type="entry name" value="FAD-bd_FR_type"/>
</dbReference>
<dbReference type="InterPro" id="IPR001094">
    <property type="entry name" value="Flavdoxin-like"/>
</dbReference>
<dbReference type="InterPro" id="IPR008254">
    <property type="entry name" value="Flavodoxin/NO_synth"/>
</dbReference>
<dbReference type="InterPro" id="IPR001709">
    <property type="entry name" value="Flavoprot_Pyr_Nucl_cyt_Rdtase"/>
</dbReference>
<dbReference type="InterPro" id="IPR029039">
    <property type="entry name" value="Flavoprotein-like_sf"/>
</dbReference>
<dbReference type="InterPro" id="IPR039261">
    <property type="entry name" value="FNR_nucleotide-bd"/>
</dbReference>
<dbReference type="InterPro" id="IPR023173">
    <property type="entry name" value="NADPH_Cyt_P450_Rdtase_alpha"/>
</dbReference>
<dbReference type="InterPro" id="IPR001433">
    <property type="entry name" value="OxRdtase_FAD/NAD-bd"/>
</dbReference>
<dbReference type="InterPro" id="IPR017938">
    <property type="entry name" value="Riboflavin_synthase-like_b-brl"/>
</dbReference>
<dbReference type="PANTHER" id="PTHR19384:SF127">
    <property type="entry name" value="BIFUNCTIONAL CYTOCHROME P450_NADPH--P450 REDUCTASE"/>
    <property type="match status" value="1"/>
</dbReference>
<dbReference type="PANTHER" id="PTHR19384">
    <property type="entry name" value="NITRIC OXIDE SYNTHASE-RELATED"/>
    <property type="match status" value="1"/>
</dbReference>
<dbReference type="Pfam" id="PF00667">
    <property type="entry name" value="FAD_binding_1"/>
    <property type="match status" value="1"/>
</dbReference>
<dbReference type="Pfam" id="PF00258">
    <property type="entry name" value="Flavodoxin_1"/>
    <property type="match status" value="1"/>
</dbReference>
<dbReference type="Pfam" id="PF00175">
    <property type="entry name" value="NAD_binding_1"/>
    <property type="match status" value="1"/>
</dbReference>
<dbReference type="Pfam" id="PF00067">
    <property type="entry name" value="p450"/>
    <property type="match status" value="1"/>
</dbReference>
<dbReference type="PIRSF" id="PIRSF000209">
    <property type="entry name" value="Bifunctional_P450_P450R"/>
    <property type="match status" value="1"/>
</dbReference>
<dbReference type="PRINTS" id="PR00369">
    <property type="entry name" value="FLAVODOXIN"/>
</dbReference>
<dbReference type="PRINTS" id="PR00371">
    <property type="entry name" value="FPNCR"/>
</dbReference>
<dbReference type="SUPFAM" id="SSF48264">
    <property type="entry name" value="Cytochrome P450"/>
    <property type="match status" value="1"/>
</dbReference>
<dbReference type="SUPFAM" id="SSF52343">
    <property type="entry name" value="Ferredoxin reductase-like, C-terminal NADP-linked domain"/>
    <property type="match status" value="1"/>
</dbReference>
<dbReference type="SUPFAM" id="SSF52218">
    <property type="entry name" value="Flavoproteins"/>
    <property type="match status" value="1"/>
</dbReference>
<dbReference type="SUPFAM" id="SSF63380">
    <property type="entry name" value="Riboflavin synthase domain-like"/>
    <property type="match status" value="1"/>
</dbReference>
<dbReference type="PROSITE" id="PS00086">
    <property type="entry name" value="CYTOCHROME_P450"/>
    <property type="match status" value="1"/>
</dbReference>
<dbReference type="PROSITE" id="PS51384">
    <property type="entry name" value="FAD_FR"/>
    <property type="match status" value="1"/>
</dbReference>
<dbReference type="PROSITE" id="PS50902">
    <property type="entry name" value="FLAVODOXIN_LIKE"/>
    <property type="match status" value="1"/>
</dbReference>
<feature type="chain" id="PRO_0000459039" description="Self-sufficient cytochrome P450 monooxygenase CYP505E4">
    <location>
        <begin position="1"/>
        <end position="1048"/>
    </location>
</feature>
<feature type="domain" description="Flavodoxin-like" evidence="3">
    <location>
        <begin position="499"/>
        <end position="640"/>
    </location>
</feature>
<feature type="domain" description="FAD-binding FR-type" evidence="4">
    <location>
        <begin position="678"/>
        <end position="906"/>
    </location>
</feature>
<feature type="binding site" description="axial binding residue" evidence="1">
    <location>
        <position position="405"/>
    </location>
    <ligand>
        <name>heme</name>
        <dbReference type="ChEBI" id="CHEBI:30413"/>
    </ligand>
    <ligandPart>
        <name>Fe</name>
        <dbReference type="ChEBI" id="CHEBI:18248"/>
    </ligandPart>
</feature>
<feature type="binding site" evidence="3">
    <location>
        <begin position="505"/>
        <end position="509"/>
    </location>
    <ligand>
        <name>FMN</name>
        <dbReference type="ChEBI" id="CHEBI:58210"/>
    </ligand>
</feature>
<feature type="binding site" evidence="3">
    <location>
        <begin position="584"/>
        <end position="616"/>
    </location>
    <ligand>
        <name>FMN</name>
        <dbReference type="ChEBI" id="CHEBI:58210"/>
    </ligand>
</feature>
<keyword id="KW-0249">Electron transport</keyword>
<keyword id="KW-0274">FAD</keyword>
<keyword id="KW-0285">Flavoprotein</keyword>
<keyword id="KW-0288">FMN</keyword>
<keyword id="KW-0349">Heme</keyword>
<keyword id="KW-0408">Iron</keyword>
<keyword id="KW-0479">Metal-binding</keyword>
<keyword id="KW-0503">Monooxygenase</keyword>
<keyword id="KW-0521">NADP</keyword>
<keyword id="KW-0560">Oxidoreductase</keyword>
<keyword id="KW-1185">Reference proteome</keyword>
<keyword id="KW-0813">Transport</keyword>
<accession>A0A0A2J1Z6</accession>
<evidence type="ECO:0000250" key="1">
    <source>
        <dbReference type="UniProtKB" id="P14779"/>
    </source>
</evidence>
<evidence type="ECO:0000250" key="2">
    <source>
        <dbReference type="UniProtKB" id="Q9Y8G7"/>
    </source>
</evidence>
<evidence type="ECO:0000255" key="3">
    <source>
        <dbReference type="PROSITE-ProRule" id="PRU00088"/>
    </source>
</evidence>
<evidence type="ECO:0000255" key="4">
    <source>
        <dbReference type="PROSITE-ProRule" id="PRU00716"/>
    </source>
</evidence>
<evidence type="ECO:0000269" key="5">
    <source>
    </source>
</evidence>
<evidence type="ECO:0000303" key="6">
    <source>
    </source>
</evidence>
<evidence type="ECO:0000305" key="7"/>
<comment type="function">
    <text evidence="5">Self-sufficient cytochrome P450 monooxygenase that catalyzes the regioselective in-chain hydroxylation of alkanes, fatty alcohols, and fatty acids at the omega-7 position (PubMed:36607403). Performs hydroxylation of C10-C16 n-alkanes and C12 and C14 fatty alcohols; and thereby enables the one step biocatalytic synthesis of rare alcohols such as 5-dodecanol and 7-tetradecanol (PubMed:36607403). Converts 1-dodecanol into 1,5-dodecanediol as major product with very little sub-terminally hydroxylated products with the 1,4-dodecanediol and 1,6-dodecanediol more abundant (PubMed:36607403). Converts dodecanoic acid to 5-hydroxydodecanoic acid which can be further converted into delta-dodecalactone by lactonization of the 5-hydroxy acid at low pH (PubMed:36607403). Also gives sub-terminal hydroxylation of dodecanoic acid with 9-hydroxydodecanoic acid being the second most abundant product (PubMed:36607403).</text>
</comment>
<comment type="catalytic activity">
    <reaction evidence="5">
        <text>2 oxidized [cytochrome P450] + NADPH = 2 reduced [cytochrome P450] + NADP(+) + H(+)</text>
        <dbReference type="Rhea" id="RHEA:24040"/>
        <dbReference type="Rhea" id="RHEA-COMP:14627"/>
        <dbReference type="Rhea" id="RHEA-COMP:14628"/>
        <dbReference type="ChEBI" id="CHEBI:15378"/>
        <dbReference type="ChEBI" id="CHEBI:55376"/>
        <dbReference type="ChEBI" id="CHEBI:57783"/>
        <dbReference type="ChEBI" id="CHEBI:58349"/>
        <dbReference type="ChEBI" id="CHEBI:60344"/>
        <dbReference type="EC" id="1.6.2.4"/>
    </reaction>
</comment>
<comment type="catalytic activity">
    <reaction evidence="5">
        <text>an organic molecule + reduced [NADPH--hemoprotein reductase] + O2 = an alcohol + oxidized [NADPH--hemoprotein reductase] + H2O + H(+)</text>
        <dbReference type="Rhea" id="RHEA:17149"/>
        <dbReference type="Rhea" id="RHEA-COMP:11964"/>
        <dbReference type="Rhea" id="RHEA-COMP:11965"/>
        <dbReference type="ChEBI" id="CHEBI:15377"/>
        <dbReference type="ChEBI" id="CHEBI:15378"/>
        <dbReference type="ChEBI" id="CHEBI:15379"/>
        <dbReference type="ChEBI" id="CHEBI:30879"/>
        <dbReference type="ChEBI" id="CHEBI:57618"/>
        <dbReference type="ChEBI" id="CHEBI:58210"/>
        <dbReference type="ChEBI" id="CHEBI:142491"/>
        <dbReference type="EC" id="1.14.14.1"/>
    </reaction>
</comment>
<comment type="catalytic activity">
    <reaction evidence="5">
        <text>dodecanoate + reduced [NADPH--hemoprotein reductase] + O2 = 5-hydroxydodecanoate + oxidized [NADPH--hemoprotein reductase] + H2O + H(+)</text>
        <dbReference type="Rhea" id="RHEA:76723"/>
        <dbReference type="Rhea" id="RHEA-COMP:11964"/>
        <dbReference type="Rhea" id="RHEA-COMP:11965"/>
        <dbReference type="ChEBI" id="CHEBI:15377"/>
        <dbReference type="ChEBI" id="CHEBI:15378"/>
        <dbReference type="ChEBI" id="CHEBI:15379"/>
        <dbReference type="ChEBI" id="CHEBI:18262"/>
        <dbReference type="ChEBI" id="CHEBI:57618"/>
        <dbReference type="ChEBI" id="CHEBI:58210"/>
        <dbReference type="ChEBI" id="CHEBI:195418"/>
    </reaction>
    <physiologicalReaction direction="left-to-right" evidence="5">
        <dbReference type="Rhea" id="RHEA:76724"/>
    </physiologicalReaction>
</comment>
<comment type="catalytic activity">
    <reaction evidence="5">
        <text>tetradecanoate + reduced [NADPH--hemoprotein reductase] + O2 = 7-hydroxytetradecanoate + oxidized [NADPH--hemoprotein reductase] + H2O + H(+)</text>
        <dbReference type="Rhea" id="RHEA:76727"/>
        <dbReference type="Rhea" id="RHEA-COMP:11964"/>
        <dbReference type="Rhea" id="RHEA-COMP:11965"/>
        <dbReference type="ChEBI" id="CHEBI:15377"/>
        <dbReference type="ChEBI" id="CHEBI:15378"/>
        <dbReference type="ChEBI" id="CHEBI:15379"/>
        <dbReference type="ChEBI" id="CHEBI:30807"/>
        <dbReference type="ChEBI" id="CHEBI:57618"/>
        <dbReference type="ChEBI" id="CHEBI:58210"/>
        <dbReference type="ChEBI" id="CHEBI:195419"/>
    </reaction>
    <physiologicalReaction direction="left-to-right" evidence="5">
        <dbReference type="Rhea" id="RHEA:76728"/>
    </physiologicalReaction>
</comment>
<comment type="catalytic activity">
    <reaction evidence="5">
        <text>dodecan-1-ol + reduced [NADPH--hemoprotein reductase] + O2 = 1,5-dodecanediol + oxidized [NADPH--hemoprotein reductase] + H2O + H(+)</text>
        <dbReference type="Rhea" id="RHEA:76759"/>
        <dbReference type="Rhea" id="RHEA-COMP:11964"/>
        <dbReference type="Rhea" id="RHEA-COMP:11965"/>
        <dbReference type="ChEBI" id="CHEBI:15377"/>
        <dbReference type="ChEBI" id="CHEBI:15378"/>
        <dbReference type="ChEBI" id="CHEBI:15379"/>
        <dbReference type="ChEBI" id="CHEBI:28878"/>
        <dbReference type="ChEBI" id="CHEBI:57618"/>
        <dbReference type="ChEBI" id="CHEBI:58210"/>
        <dbReference type="ChEBI" id="CHEBI:195414"/>
    </reaction>
    <physiologicalReaction direction="left-to-right" evidence="5">
        <dbReference type="Rhea" id="RHEA:76760"/>
    </physiologicalReaction>
</comment>
<comment type="catalytic activity">
    <reaction evidence="5">
        <text>dodecan-1-ol + reduced [NADPH--hemoprotein reductase] + O2 = 1,4-dodecanediol + oxidized [NADPH--hemoprotein reductase] + H2O + H(+)</text>
        <dbReference type="Rhea" id="RHEA:76763"/>
        <dbReference type="Rhea" id="RHEA-COMP:11964"/>
        <dbReference type="Rhea" id="RHEA-COMP:11965"/>
        <dbReference type="ChEBI" id="CHEBI:15377"/>
        <dbReference type="ChEBI" id="CHEBI:15378"/>
        <dbReference type="ChEBI" id="CHEBI:15379"/>
        <dbReference type="ChEBI" id="CHEBI:28878"/>
        <dbReference type="ChEBI" id="CHEBI:57618"/>
        <dbReference type="ChEBI" id="CHEBI:58210"/>
        <dbReference type="ChEBI" id="CHEBI:195422"/>
    </reaction>
    <physiologicalReaction direction="left-to-right" evidence="5">
        <dbReference type="Rhea" id="RHEA:76764"/>
    </physiologicalReaction>
</comment>
<comment type="catalytic activity">
    <reaction evidence="5">
        <text>dodecan-1-ol + reduced [NADPH--hemoprotein reductase] + O2 = 1,6-dodecanediol + oxidized [NADPH--hemoprotein reductase] + H2O + H(+)</text>
        <dbReference type="Rhea" id="RHEA:76779"/>
        <dbReference type="Rhea" id="RHEA-COMP:11964"/>
        <dbReference type="Rhea" id="RHEA-COMP:11965"/>
        <dbReference type="ChEBI" id="CHEBI:15377"/>
        <dbReference type="ChEBI" id="CHEBI:15378"/>
        <dbReference type="ChEBI" id="CHEBI:15379"/>
        <dbReference type="ChEBI" id="CHEBI:28878"/>
        <dbReference type="ChEBI" id="CHEBI:57618"/>
        <dbReference type="ChEBI" id="CHEBI:58210"/>
        <dbReference type="ChEBI" id="CHEBI:195445"/>
    </reaction>
    <physiologicalReaction direction="left-to-right" evidence="5">
        <dbReference type="Rhea" id="RHEA:76780"/>
    </physiologicalReaction>
</comment>
<comment type="cofactor">
    <cofactor evidence="2">
        <name>FAD</name>
        <dbReference type="ChEBI" id="CHEBI:57692"/>
    </cofactor>
    <text evidence="2">Binds 1 FAD.</text>
</comment>
<comment type="cofactor">
    <cofactor evidence="2">
        <name>FMN</name>
        <dbReference type="ChEBI" id="CHEBI:58210"/>
    </cofactor>
    <text evidence="2">Binds 1 FMN.</text>
</comment>
<comment type="cofactor">
    <cofactor evidence="2">
        <name>heme</name>
        <dbReference type="ChEBI" id="CHEBI:30413"/>
    </cofactor>
</comment>
<comment type="similarity">
    <text evidence="7">In the N-terminal section; belongs to the cytochrome P450 family.</text>
</comment>